<feature type="chain" id="PRO_1000187527" description="Segregation and condensation protein B">
    <location>
        <begin position="1"/>
        <end position="190"/>
    </location>
</feature>
<comment type="function">
    <text evidence="1">Participates in chromosomal partition during cell division. May act via the formation of a condensin-like complex containing Smc and ScpA that pull DNA away from mid-cell into both cell halves.</text>
</comment>
<comment type="subunit">
    <text evidence="1">Homodimer. Homodimerization may be required to stabilize the binding of ScpA to the Smc head domains. Component of a cohesin-like complex composed of ScpA, ScpB and the Smc homodimer, in which ScpA and ScpB bind to the head domain of Smc. The presence of the three proteins is required for the association of the complex with DNA.</text>
</comment>
<comment type="subcellular location">
    <subcellularLocation>
        <location evidence="1">Cytoplasm</location>
    </subcellularLocation>
    <text evidence="1">Associated with two foci at the outer edges of the nucleoid region in young cells, and at four foci within both cell halves in older cells.</text>
</comment>
<comment type="similarity">
    <text evidence="1">Belongs to the ScpB family.</text>
</comment>
<reference key="1">
    <citation type="submission" date="2008-10" db="EMBL/GenBank/DDBJ databases">
        <title>Genome sequence of Bacillus cereus G9842.</title>
        <authorList>
            <person name="Dodson R.J."/>
            <person name="Durkin A.S."/>
            <person name="Rosovitz M.J."/>
            <person name="Rasko D.A."/>
            <person name="Hoffmaster A."/>
            <person name="Ravel J."/>
            <person name="Sutton G."/>
        </authorList>
    </citation>
    <scope>NUCLEOTIDE SEQUENCE [LARGE SCALE GENOMIC DNA]</scope>
    <source>
        <strain>G9842</strain>
    </source>
</reference>
<sequence length="190" mass="21493">MDRKEQKSIIEGLLFVSGDEGIYPEQIAKVLEIEMNEVMNILEEMQQECEGANRGLQIVQYAKVYRFATKKEHASYYQKLIDTPTAASLSQAALETLAIVAYRQPITRTEMEEIRGVKTDKALQTLVSHLLIKEMGRAEGPGRPILYGTTKEFLDTFGLKTLDDLPPLSEENEQMNEADLFFGSLQEISK</sequence>
<organism>
    <name type="scientific">Bacillus cereus (strain G9842)</name>
    <dbReference type="NCBI Taxonomy" id="405531"/>
    <lineage>
        <taxon>Bacteria</taxon>
        <taxon>Bacillati</taxon>
        <taxon>Bacillota</taxon>
        <taxon>Bacilli</taxon>
        <taxon>Bacillales</taxon>
        <taxon>Bacillaceae</taxon>
        <taxon>Bacillus</taxon>
        <taxon>Bacillus cereus group</taxon>
    </lineage>
</organism>
<dbReference type="EMBL" id="CP001186">
    <property type="protein sequence ID" value="ACK93741.1"/>
    <property type="molecule type" value="Genomic_DNA"/>
</dbReference>
<dbReference type="RefSeq" id="WP_000375173.1">
    <property type="nucleotide sequence ID" value="NC_011772.1"/>
</dbReference>
<dbReference type="SMR" id="B7IWG9"/>
<dbReference type="KEGG" id="bcg:BCG9842_B1072"/>
<dbReference type="HOGENOM" id="CLU_045647_5_3_9"/>
<dbReference type="Proteomes" id="UP000006744">
    <property type="component" value="Chromosome"/>
</dbReference>
<dbReference type="GO" id="GO:0005737">
    <property type="term" value="C:cytoplasm"/>
    <property type="evidence" value="ECO:0007669"/>
    <property type="project" value="UniProtKB-SubCell"/>
</dbReference>
<dbReference type="GO" id="GO:0051301">
    <property type="term" value="P:cell division"/>
    <property type="evidence" value="ECO:0007669"/>
    <property type="project" value="UniProtKB-KW"/>
</dbReference>
<dbReference type="GO" id="GO:0051304">
    <property type="term" value="P:chromosome separation"/>
    <property type="evidence" value="ECO:0007669"/>
    <property type="project" value="InterPro"/>
</dbReference>
<dbReference type="GO" id="GO:0006260">
    <property type="term" value="P:DNA replication"/>
    <property type="evidence" value="ECO:0007669"/>
    <property type="project" value="UniProtKB-UniRule"/>
</dbReference>
<dbReference type="Gene3D" id="1.10.10.10">
    <property type="entry name" value="Winged helix-like DNA-binding domain superfamily/Winged helix DNA-binding domain"/>
    <property type="match status" value="2"/>
</dbReference>
<dbReference type="HAMAP" id="MF_01804">
    <property type="entry name" value="ScpB"/>
    <property type="match status" value="1"/>
</dbReference>
<dbReference type="InterPro" id="IPR005234">
    <property type="entry name" value="ScpB_csome_segregation"/>
</dbReference>
<dbReference type="InterPro" id="IPR036388">
    <property type="entry name" value="WH-like_DNA-bd_sf"/>
</dbReference>
<dbReference type="InterPro" id="IPR036390">
    <property type="entry name" value="WH_DNA-bd_sf"/>
</dbReference>
<dbReference type="NCBIfam" id="TIGR00281">
    <property type="entry name" value="SMC-Scp complex subunit ScpB"/>
    <property type="match status" value="1"/>
</dbReference>
<dbReference type="PANTHER" id="PTHR34298">
    <property type="entry name" value="SEGREGATION AND CONDENSATION PROTEIN B"/>
    <property type="match status" value="1"/>
</dbReference>
<dbReference type="PANTHER" id="PTHR34298:SF2">
    <property type="entry name" value="SEGREGATION AND CONDENSATION PROTEIN B"/>
    <property type="match status" value="1"/>
</dbReference>
<dbReference type="Pfam" id="PF04079">
    <property type="entry name" value="SMC_ScpB"/>
    <property type="match status" value="1"/>
</dbReference>
<dbReference type="PIRSF" id="PIRSF019345">
    <property type="entry name" value="ScpB"/>
    <property type="match status" value="1"/>
</dbReference>
<dbReference type="SUPFAM" id="SSF46785">
    <property type="entry name" value="Winged helix' DNA-binding domain"/>
    <property type="match status" value="2"/>
</dbReference>
<gene>
    <name evidence="1" type="primary">scpB</name>
    <name type="ordered locus">BCG9842_B1072</name>
</gene>
<accession>B7IWG9</accession>
<protein>
    <recommendedName>
        <fullName evidence="1">Segregation and condensation protein B</fullName>
    </recommendedName>
</protein>
<keyword id="KW-0131">Cell cycle</keyword>
<keyword id="KW-0132">Cell division</keyword>
<keyword id="KW-0159">Chromosome partition</keyword>
<keyword id="KW-0963">Cytoplasm</keyword>
<name>SCPB_BACC2</name>
<proteinExistence type="inferred from homology"/>
<evidence type="ECO:0000255" key="1">
    <source>
        <dbReference type="HAMAP-Rule" id="MF_01804"/>
    </source>
</evidence>